<name>ZHD4_ARATH</name>
<dbReference type="EMBL" id="AC012188">
    <property type="protein sequence ID" value="AAF43944.1"/>
    <property type="molecule type" value="Genomic_DNA"/>
</dbReference>
<dbReference type="EMBL" id="CP002684">
    <property type="protein sequence ID" value="AEE29163.1"/>
    <property type="molecule type" value="Genomic_DNA"/>
</dbReference>
<dbReference type="EMBL" id="CP002684">
    <property type="protein sequence ID" value="AEE29164.1"/>
    <property type="molecule type" value="Genomic_DNA"/>
</dbReference>
<dbReference type="EMBL" id="AY074266">
    <property type="protein sequence ID" value="AAL66963.1"/>
    <property type="molecule type" value="mRNA"/>
</dbReference>
<dbReference type="EMBL" id="AY096738">
    <property type="protein sequence ID" value="AAM20372.1"/>
    <property type="molecule type" value="mRNA"/>
</dbReference>
<dbReference type="EMBL" id="AB493456">
    <property type="protein sequence ID" value="BAH30294.1"/>
    <property type="molecule type" value="mRNA"/>
</dbReference>
<dbReference type="PIR" id="A86279">
    <property type="entry name" value="A86279"/>
</dbReference>
<dbReference type="RefSeq" id="NP_172896.1">
    <property type="nucleotide sequence ID" value="NM_101311.6"/>
</dbReference>
<dbReference type="RefSeq" id="NP_973826.1">
    <property type="nucleotide sequence ID" value="NM_202097.1"/>
</dbReference>
<dbReference type="SMR" id="Q9M9S0"/>
<dbReference type="BioGRID" id="23246">
    <property type="interactions" value="8"/>
</dbReference>
<dbReference type="FunCoup" id="Q9M9S0">
    <property type="interactions" value="298"/>
</dbReference>
<dbReference type="IntAct" id="Q9M9S0">
    <property type="interactions" value="13"/>
</dbReference>
<dbReference type="STRING" id="3702.Q9M9S0"/>
<dbReference type="iPTMnet" id="Q9M9S0"/>
<dbReference type="PaxDb" id="3702-AT1G14440.1"/>
<dbReference type="ProteomicsDB" id="242967"/>
<dbReference type="EnsemblPlants" id="AT1G14440.1">
    <property type="protein sequence ID" value="AT1G14440.1"/>
    <property type="gene ID" value="AT1G14440"/>
</dbReference>
<dbReference type="EnsemblPlants" id="AT1G14440.2">
    <property type="protein sequence ID" value="AT1G14440.2"/>
    <property type="gene ID" value="AT1G14440"/>
</dbReference>
<dbReference type="GeneID" id="838006"/>
<dbReference type="Gramene" id="AT1G14440.1">
    <property type="protein sequence ID" value="AT1G14440.1"/>
    <property type="gene ID" value="AT1G14440"/>
</dbReference>
<dbReference type="Gramene" id="AT1G14440.2">
    <property type="protein sequence ID" value="AT1G14440.2"/>
    <property type="gene ID" value="AT1G14440"/>
</dbReference>
<dbReference type="KEGG" id="ath:AT1G14440"/>
<dbReference type="Araport" id="AT1G14440"/>
<dbReference type="TAIR" id="AT1G14440">
    <property type="gene designation" value="HB31"/>
</dbReference>
<dbReference type="eggNOG" id="ENOG502QSB4">
    <property type="taxonomic scope" value="Eukaryota"/>
</dbReference>
<dbReference type="HOGENOM" id="CLU_039237_2_1_1"/>
<dbReference type="InParanoid" id="Q9M9S0"/>
<dbReference type="OMA" id="SSCDCFH"/>
<dbReference type="OrthoDB" id="694008at2759"/>
<dbReference type="PhylomeDB" id="Q9M9S0"/>
<dbReference type="PRO" id="PR:Q9M9S0"/>
<dbReference type="Proteomes" id="UP000006548">
    <property type="component" value="Chromosome 1"/>
</dbReference>
<dbReference type="ExpressionAtlas" id="Q9M9S0">
    <property type="expression patterns" value="baseline and differential"/>
</dbReference>
<dbReference type="GO" id="GO:0005634">
    <property type="term" value="C:nucleus"/>
    <property type="evidence" value="ECO:0000250"/>
    <property type="project" value="UniProtKB"/>
</dbReference>
<dbReference type="GO" id="GO:0003677">
    <property type="term" value="F:DNA binding"/>
    <property type="evidence" value="ECO:0007669"/>
    <property type="project" value="UniProtKB-KW"/>
</dbReference>
<dbReference type="GO" id="GO:0042803">
    <property type="term" value="F:protein homodimerization activity"/>
    <property type="evidence" value="ECO:0000314"/>
    <property type="project" value="UniProtKB"/>
</dbReference>
<dbReference type="GO" id="GO:0008270">
    <property type="term" value="F:zinc ion binding"/>
    <property type="evidence" value="ECO:0007669"/>
    <property type="project" value="UniProtKB-KW"/>
</dbReference>
<dbReference type="GO" id="GO:0048574">
    <property type="term" value="P:long-day photoperiodism, flowering"/>
    <property type="evidence" value="ECO:0000270"/>
    <property type="project" value="UniProtKB"/>
</dbReference>
<dbReference type="FunFam" id="1.10.10.60:FF:000257">
    <property type="entry name" value="Zinc-finger homeodomain protein 2"/>
    <property type="match status" value="1"/>
</dbReference>
<dbReference type="Gene3D" id="1.10.10.60">
    <property type="entry name" value="Homeodomain-like"/>
    <property type="match status" value="1"/>
</dbReference>
<dbReference type="InterPro" id="IPR009057">
    <property type="entry name" value="Homeodomain-like_sf"/>
</dbReference>
<dbReference type="InterPro" id="IPR006455">
    <property type="entry name" value="Homeodomain_ZF_HD"/>
</dbReference>
<dbReference type="InterPro" id="IPR006456">
    <property type="entry name" value="ZF_HD_homeobox_Cys/His_dimer"/>
</dbReference>
<dbReference type="NCBIfam" id="TIGR01565">
    <property type="entry name" value="homeo_ZF_HD"/>
    <property type="match status" value="1"/>
</dbReference>
<dbReference type="NCBIfam" id="TIGR01566">
    <property type="entry name" value="ZF_HD_prot_N"/>
    <property type="match status" value="1"/>
</dbReference>
<dbReference type="PANTHER" id="PTHR31948">
    <property type="entry name" value="ZINC-FINGER HOMEODOMAIN PROTEIN 2"/>
    <property type="match status" value="1"/>
</dbReference>
<dbReference type="PANTHER" id="PTHR31948:SF177">
    <property type="entry name" value="ZINC-FINGER HOMEODOMAIN PROTEIN 4"/>
    <property type="match status" value="1"/>
</dbReference>
<dbReference type="Pfam" id="PF04770">
    <property type="entry name" value="ZF-HD_dimer"/>
    <property type="match status" value="1"/>
</dbReference>
<dbReference type="SUPFAM" id="SSF46689">
    <property type="entry name" value="Homeodomain-like"/>
    <property type="match status" value="1"/>
</dbReference>
<dbReference type="PROSITE" id="PS51523">
    <property type="entry name" value="ZF_HD_DIMER"/>
    <property type="match status" value="1"/>
</dbReference>
<gene>
    <name type="primary">ZHD4</name>
    <name type="synonym">FTM2</name>
    <name type="synonym">HB31</name>
    <name type="ordered locus">At1g14440</name>
    <name type="ORF">F14L17.21</name>
</gene>
<organism>
    <name type="scientific">Arabidopsis thaliana</name>
    <name type="common">Mouse-ear cress</name>
    <dbReference type="NCBI Taxonomy" id="3702"/>
    <lineage>
        <taxon>Eukaryota</taxon>
        <taxon>Viridiplantae</taxon>
        <taxon>Streptophyta</taxon>
        <taxon>Embryophyta</taxon>
        <taxon>Tracheophyta</taxon>
        <taxon>Spermatophyta</taxon>
        <taxon>Magnoliopsida</taxon>
        <taxon>eudicotyledons</taxon>
        <taxon>Gunneridae</taxon>
        <taxon>Pentapetalae</taxon>
        <taxon>rosids</taxon>
        <taxon>malvids</taxon>
        <taxon>Brassicales</taxon>
        <taxon>Brassicaceae</taxon>
        <taxon>Camelineae</taxon>
        <taxon>Arabidopsis</taxon>
    </lineage>
</organism>
<reference key="1">
    <citation type="journal article" date="2000" name="Nature">
        <title>Sequence and analysis of chromosome 1 of the plant Arabidopsis thaliana.</title>
        <authorList>
            <person name="Theologis A."/>
            <person name="Ecker J.R."/>
            <person name="Palm C.J."/>
            <person name="Federspiel N.A."/>
            <person name="Kaul S."/>
            <person name="White O."/>
            <person name="Alonso J."/>
            <person name="Altafi H."/>
            <person name="Araujo R."/>
            <person name="Bowman C.L."/>
            <person name="Brooks S.Y."/>
            <person name="Buehler E."/>
            <person name="Chan A."/>
            <person name="Chao Q."/>
            <person name="Chen H."/>
            <person name="Cheuk R.F."/>
            <person name="Chin C.W."/>
            <person name="Chung M.K."/>
            <person name="Conn L."/>
            <person name="Conway A.B."/>
            <person name="Conway A.R."/>
            <person name="Creasy T.H."/>
            <person name="Dewar K."/>
            <person name="Dunn P."/>
            <person name="Etgu P."/>
            <person name="Feldblyum T.V."/>
            <person name="Feng J.-D."/>
            <person name="Fong B."/>
            <person name="Fujii C.Y."/>
            <person name="Gill J.E."/>
            <person name="Goldsmith A.D."/>
            <person name="Haas B."/>
            <person name="Hansen N.F."/>
            <person name="Hughes B."/>
            <person name="Huizar L."/>
            <person name="Hunter J.L."/>
            <person name="Jenkins J."/>
            <person name="Johnson-Hopson C."/>
            <person name="Khan S."/>
            <person name="Khaykin E."/>
            <person name="Kim C.J."/>
            <person name="Koo H.L."/>
            <person name="Kremenetskaia I."/>
            <person name="Kurtz D.B."/>
            <person name="Kwan A."/>
            <person name="Lam B."/>
            <person name="Langin-Hooper S."/>
            <person name="Lee A."/>
            <person name="Lee J.M."/>
            <person name="Lenz C.A."/>
            <person name="Li J.H."/>
            <person name="Li Y.-P."/>
            <person name="Lin X."/>
            <person name="Liu S.X."/>
            <person name="Liu Z.A."/>
            <person name="Luros J.S."/>
            <person name="Maiti R."/>
            <person name="Marziali A."/>
            <person name="Militscher J."/>
            <person name="Miranda M."/>
            <person name="Nguyen M."/>
            <person name="Nierman W.C."/>
            <person name="Osborne B.I."/>
            <person name="Pai G."/>
            <person name="Peterson J."/>
            <person name="Pham P.K."/>
            <person name="Rizzo M."/>
            <person name="Rooney T."/>
            <person name="Rowley D."/>
            <person name="Sakano H."/>
            <person name="Salzberg S.L."/>
            <person name="Schwartz J.R."/>
            <person name="Shinn P."/>
            <person name="Southwick A.M."/>
            <person name="Sun H."/>
            <person name="Tallon L.J."/>
            <person name="Tambunga G."/>
            <person name="Toriumi M.J."/>
            <person name="Town C.D."/>
            <person name="Utterback T."/>
            <person name="Van Aken S."/>
            <person name="Vaysberg M."/>
            <person name="Vysotskaia V.S."/>
            <person name="Walker M."/>
            <person name="Wu D."/>
            <person name="Yu G."/>
            <person name="Fraser C.M."/>
            <person name="Venter J.C."/>
            <person name="Davis R.W."/>
        </authorList>
    </citation>
    <scope>NUCLEOTIDE SEQUENCE [LARGE SCALE GENOMIC DNA]</scope>
    <source>
        <strain>cv. Columbia</strain>
    </source>
</reference>
<reference key="2">
    <citation type="journal article" date="2017" name="Plant J.">
        <title>Araport11: a complete reannotation of the Arabidopsis thaliana reference genome.</title>
        <authorList>
            <person name="Cheng C.Y."/>
            <person name="Krishnakumar V."/>
            <person name="Chan A.P."/>
            <person name="Thibaud-Nissen F."/>
            <person name="Schobel S."/>
            <person name="Town C.D."/>
        </authorList>
    </citation>
    <scope>GENOME REANNOTATION</scope>
    <source>
        <strain>cv. Columbia</strain>
    </source>
</reference>
<reference key="3">
    <citation type="journal article" date="2003" name="Science">
        <title>Empirical analysis of transcriptional activity in the Arabidopsis genome.</title>
        <authorList>
            <person name="Yamada K."/>
            <person name="Lim J."/>
            <person name="Dale J.M."/>
            <person name="Chen H."/>
            <person name="Shinn P."/>
            <person name="Palm C.J."/>
            <person name="Southwick A.M."/>
            <person name="Wu H.C."/>
            <person name="Kim C.J."/>
            <person name="Nguyen M."/>
            <person name="Pham P.K."/>
            <person name="Cheuk R.F."/>
            <person name="Karlin-Newmann G."/>
            <person name="Liu S.X."/>
            <person name="Lam B."/>
            <person name="Sakano H."/>
            <person name="Wu T."/>
            <person name="Yu G."/>
            <person name="Miranda M."/>
            <person name="Quach H.L."/>
            <person name="Tripp M."/>
            <person name="Chang C.H."/>
            <person name="Lee J.M."/>
            <person name="Toriumi M.J."/>
            <person name="Chan M.M."/>
            <person name="Tang C.C."/>
            <person name="Onodera C.S."/>
            <person name="Deng J.M."/>
            <person name="Akiyama K."/>
            <person name="Ansari Y."/>
            <person name="Arakawa T."/>
            <person name="Banh J."/>
            <person name="Banno F."/>
            <person name="Bowser L."/>
            <person name="Brooks S.Y."/>
            <person name="Carninci P."/>
            <person name="Chao Q."/>
            <person name="Choy N."/>
            <person name="Enju A."/>
            <person name="Goldsmith A.D."/>
            <person name="Gurjal M."/>
            <person name="Hansen N.F."/>
            <person name="Hayashizaki Y."/>
            <person name="Johnson-Hopson C."/>
            <person name="Hsuan V.W."/>
            <person name="Iida K."/>
            <person name="Karnes M."/>
            <person name="Khan S."/>
            <person name="Koesema E."/>
            <person name="Ishida J."/>
            <person name="Jiang P.X."/>
            <person name="Jones T."/>
            <person name="Kawai J."/>
            <person name="Kamiya A."/>
            <person name="Meyers C."/>
            <person name="Nakajima M."/>
            <person name="Narusaka M."/>
            <person name="Seki M."/>
            <person name="Sakurai T."/>
            <person name="Satou M."/>
            <person name="Tamse R."/>
            <person name="Vaysberg M."/>
            <person name="Wallender E.K."/>
            <person name="Wong C."/>
            <person name="Yamamura Y."/>
            <person name="Yuan S."/>
            <person name="Shinozaki K."/>
            <person name="Davis R.W."/>
            <person name="Theologis A."/>
            <person name="Ecker J.R."/>
        </authorList>
    </citation>
    <scope>NUCLEOTIDE SEQUENCE [LARGE SCALE MRNA]</scope>
    <source>
        <strain>cv. Columbia</strain>
    </source>
</reference>
<reference key="4">
    <citation type="submission" date="2009-03" db="EMBL/GenBank/DDBJ databases">
        <title>ORF cloning and analysis of Arabidopsis transcription factor genes.</title>
        <authorList>
            <person name="Fujita M."/>
            <person name="Mizukado S."/>
            <person name="Seki M."/>
            <person name="Shinozaki K."/>
            <person name="Mitsuda N."/>
            <person name="Takiguchi Y."/>
            <person name="Takagi M."/>
        </authorList>
    </citation>
    <scope>NUCLEOTIDE SEQUENCE [LARGE SCALE MRNA]</scope>
</reference>
<reference key="5">
    <citation type="journal article" date="2006" name="Plant Physiol.">
        <title>The Arabidopsis zinc finger-homeodomain genes encode proteins with unique biochemical properties that are coordinately expressed during floral development.</title>
        <authorList>
            <person name="Tan Q.K."/>
            <person name="Irish V.F."/>
        </authorList>
    </citation>
    <scope>HOMODIMERIZATION</scope>
    <scope>INTERACTION WITH ZHD1; ZHD2; ZHD5; ZHD7; ZHD8; ZHD10 AND ZHD11</scope>
    <scope>TISSUE SPECIFICITY</scope>
    <scope>GENE FAMILY</scope>
</reference>
<reference key="6">
    <citation type="journal article" date="2008" name="J. Integr. Plant Biol.">
        <title>Phylogenetic analysis of the plant-specific zinc finger-homeobox and mini zinc finger gene families.</title>
        <authorList>
            <person name="Hu W."/>
            <person name="dePamphilis C.W."/>
            <person name="Ma H."/>
        </authorList>
    </citation>
    <scope>GENE FAMILY</scope>
    <scope>NOMENCLATURE</scope>
</reference>
<reference key="7">
    <citation type="journal article" date="2011" name="J. Biol. Chem.">
        <title>Nuclear import and DNA binding of the ZHD5 transcription factor is modulated by a competitive peptide inhibitor in Arabidopsis.</title>
        <authorList>
            <person name="Hong S.-Y."/>
            <person name="Kim O.-K."/>
            <person name="Kim S.-G."/>
            <person name="Yang M.-S."/>
            <person name="Park C.-M."/>
        </authorList>
    </citation>
    <scope>GENE FAMILY</scope>
    <scope>NOMENCLATURE</scope>
    <source>
        <strain>cv. Columbia</strain>
    </source>
</reference>
<reference key="8">
    <citation type="journal article" date="2012" name="Plant Cell">
        <title>Analysis of the Arabidopsis shoot meristem transcriptome during floral transition identifies distinct regulatory patterns and a leucine-rich repeat protein that promotes flowering.</title>
        <authorList>
            <person name="Torti S."/>
            <person name="Fornara F."/>
            <person name="Vincent C."/>
            <person name="Andres F."/>
            <person name="Nordstrom K."/>
            <person name="Gobel U."/>
            <person name="Knoll D."/>
            <person name="Schoof H."/>
            <person name="Coupland G."/>
        </authorList>
    </citation>
    <scope>FUNCTION</scope>
    <scope>DEVELOPMENTAL STAGE</scope>
    <scope>INDUCTION BY LONG DAYS</scope>
</reference>
<sequence length="312" mass="35482">MEIASQEDHDMPIPLNTTFGGGGSHGHMIHHHDHHAANSAPPTHNNNNTTQPPPMPLHGNGHGNNYDHHHHQDPHHVGYNAIIKKPMIKYKECLKNHAAAMGGNATDGCGEFMPSGEDGSIEALTCSACNCHRNFHRKEVEGELAATAMSPYHQHPPHRKLMLNHQKIRSAMPHQMIMPIGVSNYRYMHNNSESEDFMEEDGVTTASRSLPNLPYNQKKRFRTKFTPEQKEKMLSFAEKVGWKIQRQEDCVVQRFCEEIGVKRRVLKVWMHNNKIHFSKKNNINLEDNDNEKINNLNNVDLSGNNDMTKIVP</sequence>
<feature type="chain" id="PRO_0000426018" description="Zinc-finger homeodomain protein 4">
    <location>
        <begin position="1"/>
        <end position="312"/>
    </location>
</feature>
<feature type="zinc finger region" description="ZF-HD dimerization-type; degenerate" evidence="2">
    <location>
        <begin position="90"/>
        <end position="139"/>
    </location>
</feature>
<feature type="DNA-binding region" description="Homeobox">
    <location>
        <begin position="218"/>
        <end position="281"/>
    </location>
</feature>
<feature type="region of interest" description="Disordered" evidence="3">
    <location>
        <begin position="20"/>
        <end position="74"/>
    </location>
</feature>
<feature type="compositionally biased region" description="Low complexity" evidence="3">
    <location>
        <begin position="37"/>
        <end position="50"/>
    </location>
</feature>
<feature type="site" description="Required for DNA-binding" evidence="1">
    <location>
        <position position="270"/>
    </location>
</feature>
<comment type="function">
    <text evidence="5">Putative transcription factor. Probably involved in the regulation of floral induction.</text>
</comment>
<comment type="subunit">
    <text evidence="4">Homo- and heterodimer with other ZFHD proteins. Interacts with ZHD1, ZHD2, ZHD5, ZHD7, ZHD8, ZHD10 and ZHD11.</text>
</comment>
<comment type="interaction">
    <interactant intactId="EBI-1806420">
        <id>Q9M9S0</id>
    </interactant>
    <interactant intactId="EBI-1806298">
        <id>Q9FIW9</id>
        <label>ZHD10</label>
    </interactant>
    <organismsDiffer>false</organismsDiffer>
    <experiments>4</experiments>
</comment>
<comment type="interaction">
    <interactant intactId="EBI-1806420">
        <id>Q9M9S0</id>
    </interactant>
    <interactant intactId="EBI-1806440">
        <id>Q9LHF0</id>
        <label>ZHD9</label>
    </interactant>
    <organismsDiffer>false</organismsDiffer>
    <experiments>3</experiments>
</comment>
<comment type="subcellular location">
    <subcellularLocation>
        <location evidence="1">Nucleus</location>
    </subcellularLocation>
</comment>
<comment type="tissue specificity">
    <text evidence="4">Mostly expressed in flowers and inflorescence.</text>
</comment>
<comment type="developmental stage">
    <text evidence="5">Not detected in the meristem prior to exposure to long days (LDs), but after exposure to three LDs, stable accumulation on the flanks of the meristem adjacent to floral primordia, during floral induction.</text>
</comment>
<comment type="induction">
    <text evidence="5">Induced by exposure to long days.</text>
</comment>
<comment type="domain">
    <text>The homeodomain differs form the typical one by having namely 4 instead of 3 extra amino acids inserted in the loop between helix 1 and helix 2.</text>
</comment>
<proteinExistence type="evidence at protein level"/>
<keyword id="KW-0238">DNA-binding</keyword>
<keyword id="KW-0371">Homeobox</keyword>
<keyword id="KW-0479">Metal-binding</keyword>
<keyword id="KW-0539">Nucleus</keyword>
<keyword id="KW-1185">Reference proteome</keyword>
<keyword id="KW-0804">Transcription</keyword>
<keyword id="KW-0805">Transcription regulation</keyword>
<keyword id="KW-0862">Zinc</keyword>
<keyword id="KW-0863">Zinc-finger</keyword>
<protein>
    <recommendedName>
        <fullName>Zinc-finger homeodomain protein 4</fullName>
        <shortName>AtZHD4</shortName>
    </recommendedName>
    <alternativeName>
        <fullName>Homeobox protein 31</fullName>
        <shortName>AtHB-31</shortName>
    </alternativeName>
    <alternativeName>
        <fullName>Protein FLORAL TRANSITION AT THE MERISTEM 2</fullName>
    </alternativeName>
</protein>
<evidence type="ECO:0000250" key="1"/>
<evidence type="ECO:0000255" key="2">
    <source>
        <dbReference type="PROSITE-ProRule" id="PRU00856"/>
    </source>
</evidence>
<evidence type="ECO:0000256" key="3">
    <source>
        <dbReference type="SAM" id="MobiDB-lite"/>
    </source>
</evidence>
<evidence type="ECO:0000269" key="4">
    <source>
    </source>
</evidence>
<evidence type="ECO:0000269" key="5">
    <source>
    </source>
</evidence>
<accession>Q9M9S0</accession>